<proteinExistence type="evidence at protein level"/>
<feature type="chain" id="PRO_0000329037" description="Carnosine synthase 1">
    <location>
        <begin position="1"/>
        <end position="827"/>
    </location>
</feature>
<feature type="domain" description="ATP-grasp" evidence="1">
    <location>
        <begin position="516"/>
        <end position="720"/>
    </location>
</feature>
<feature type="binding site" evidence="1">
    <location>
        <begin position="542"/>
        <end position="611"/>
    </location>
    <ligand>
        <name>ATP</name>
        <dbReference type="ChEBI" id="CHEBI:30616"/>
    </ligand>
</feature>
<feature type="binding site" evidence="1">
    <location>
        <position position="677"/>
    </location>
    <ligand>
        <name>Mg(2+)</name>
        <dbReference type="ChEBI" id="CHEBI:18420"/>
        <label>1</label>
    </ligand>
</feature>
<feature type="binding site" evidence="1">
    <location>
        <position position="677"/>
    </location>
    <ligand>
        <name>Mn(2+)</name>
        <dbReference type="ChEBI" id="CHEBI:29035"/>
        <label>1</label>
    </ligand>
</feature>
<feature type="binding site" evidence="1">
    <location>
        <position position="689"/>
    </location>
    <ligand>
        <name>Mg(2+)</name>
        <dbReference type="ChEBI" id="CHEBI:18420"/>
        <label>1</label>
    </ligand>
</feature>
<feature type="binding site" evidence="1">
    <location>
        <position position="689"/>
    </location>
    <ligand>
        <name>Mg(2+)</name>
        <dbReference type="ChEBI" id="CHEBI:18420"/>
        <label>2</label>
    </ligand>
</feature>
<feature type="binding site" evidence="1">
    <location>
        <position position="689"/>
    </location>
    <ligand>
        <name>Mn(2+)</name>
        <dbReference type="ChEBI" id="CHEBI:29035"/>
        <label>1</label>
    </ligand>
</feature>
<feature type="binding site" evidence="1">
    <location>
        <position position="689"/>
    </location>
    <ligand>
        <name>Mn(2+)</name>
        <dbReference type="ChEBI" id="CHEBI:29035"/>
        <label>2</label>
    </ligand>
</feature>
<feature type="binding site" evidence="1">
    <location>
        <position position="691"/>
    </location>
    <ligand>
        <name>Mg(2+)</name>
        <dbReference type="ChEBI" id="CHEBI:18420"/>
        <label>2</label>
    </ligand>
</feature>
<feature type="binding site" evidence="1">
    <location>
        <position position="691"/>
    </location>
    <ligand>
        <name>Mn(2+)</name>
        <dbReference type="ChEBI" id="CHEBI:29035"/>
        <label>2</label>
    </ligand>
</feature>
<feature type="splice variant" id="VSP_032927" description="In isoform 3." evidence="4">
    <location>
        <begin position="1"/>
        <end position="497"/>
    </location>
</feature>
<feature type="splice variant" id="VSP_032928" description="In isoform 2." evidence="3">
    <original>M</original>
    <variation>MLCLDPLGTEWDSKDLDGKEEPWKSGAGLPPTGCFPGPWRQDISLDCKGSPEETEARAWTVYYYGLLQSCLQQAGLPETQDRSQAPRTGCPGAEVTLCILGSPSTFLSLLLEGGVQSPGNM</variation>
    <location>
        <position position="1"/>
    </location>
</feature>
<feature type="splice variant" id="VSP_032929" description="In isoform 2." evidence="3">
    <location>
        <begin position="163"/>
        <end position="267"/>
    </location>
</feature>
<feature type="sequence conflict" description="In Ref. 3; AAH19736/AAH23699." evidence="5" ref="3">
    <original>V</original>
    <variation>M</variation>
    <location>
        <position position="656"/>
    </location>
</feature>
<dbReference type="EC" id="6.3.2.11" evidence="2"/>
<dbReference type="EMBL" id="AK129347">
    <property type="protein sequence ID" value="BAC98157.1"/>
    <property type="status" value="ALT_INIT"/>
    <property type="molecule type" value="Transcribed_RNA"/>
</dbReference>
<dbReference type="EMBL" id="AC109138">
    <property type="status" value="NOT_ANNOTATED_CDS"/>
    <property type="molecule type" value="Genomic_DNA"/>
</dbReference>
<dbReference type="EMBL" id="BC019736">
    <property type="protein sequence ID" value="AAH19736.1"/>
    <property type="molecule type" value="mRNA"/>
</dbReference>
<dbReference type="EMBL" id="BC023699">
    <property type="protein sequence ID" value="AAH23699.1"/>
    <property type="molecule type" value="mRNA"/>
</dbReference>
<dbReference type="RefSeq" id="NP_001390976.1">
    <molecule id="Q6ZPS2-1"/>
    <property type="nucleotide sequence ID" value="NM_001404047.1"/>
</dbReference>
<dbReference type="RefSeq" id="XP_006531682.1">
    <property type="nucleotide sequence ID" value="XM_006531619.2"/>
</dbReference>
<dbReference type="RefSeq" id="XP_017173530.1">
    <property type="nucleotide sequence ID" value="XM_017318041.1"/>
</dbReference>
<dbReference type="RefSeq" id="XP_036017272.1">
    <molecule id="Q6ZPS2-1"/>
    <property type="nucleotide sequence ID" value="XM_036161379.1"/>
</dbReference>
<dbReference type="SMR" id="Q6ZPS2"/>
<dbReference type="BioGRID" id="223221">
    <property type="interactions" value="2"/>
</dbReference>
<dbReference type="FunCoup" id="Q6ZPS2">
    <property type="interactions" value="57"/>
</dbReference>
<dbReference type="STRING" id="10090.ENSMUSP00000131624"/>
<dbReference type="GlyGen" id="Q6ZPS2">
    <property type="glycosylation" value="1 site, 1 N-linked glycan (1 site)"/>
</dbReference>
<dbReference type="iPTMnet" id="Q6ZPS2"/>
<dbReference type="PhosphoSitePlus" id="Q6ZPS2"/>
<dbReference type="jPOST" id="Q6ZPS2"/>
<dbReference type="PaxDb" id="10090-ENSMUSP00000131624"/>
<dbReference type="ProteomicsDB" id="285361">
    <molecule id="Q6ZPS2-1"/>
</dbReference>
<dbReference type="ProteomicsDB" id="285362">
    <molecule id="Q6ZPS2-2"/>
</dbReference>
<dbReference type="ProteomicsDB" id="285363">
    <molecule id="Q6ZPS2-3"/>
</dbReference>
<dbReference type="GeneID" id="107239"/>
<dbReference type="UCSC" id="uc012bge.1">
    <molecule id="Q6ZPS2-3"/>
    <property type="organism name" value="mouse"/>
</dbReference>
<dbReference type="UCSC" id="uc029tqn.1">
    <molecule id="Q6ZPS2-1"/>
    <property type="organism name" value="mouse"/>
</dbReference>
<dbReference type="AGR" id="MGI:2147595"/>
<dbReference type="MGI" id="MGI:2147595">
    <property type="gene designation" value="Carns1"/>
</dbReference>
<dbReference type="eggNOG" id="ENOG502QRI6">
    <property type="taxonomic scope" value="Eukaryota"/>
</dbReference>
<dbReference type="InParanoid" id="Q6ZPS2"/>
<dbReference type="PhylomeDB" id="Q6ZPS2"/>
<dbReference type="BRENDA" id="6.3.2.11">
    <property type="organism ID" value="3474"/>
</dbReference>
<dbReference type="Reactome" id="R-MMU-70921">
    <property type="pathway name" value="Histidine catabolism"/>
</dbReference>
<dbReference type="SABIO-RK" id="Q6ZPS2"/>
<dbReference type="BioGRID-ORCS" id="107239">
    <property type="hits" value="3 hits in 77 CRISPR screens"/>
</dbReference>
<dbReference type="PRO" id="PR:Q6ZPS2"/>
<dbReference type="Proteomes" id="UP000000589">
    <property type="component" value="Unplaced"/>
</dbReference>
<dbReference type="RNAct" id="Q6ZPS2">
    <property type="molecule type" value="protein"/>
</dbReference>
<dbReference type="GO" id="GO:0005524">
    <property type="term" value="F:ATP binding"/>
    <property type="evidence" value="ECO:0007669"/>
    <property type="project" value="UniProtKB-KW"/>
</dbReference>
<dbReference type="GO" id="GO:0016887">
    <property type="term" value="F:ATP hydrolysis activity"/>
    <property type="evidence" value="ECO:0000314"/>
    <property type="project" value="MGI"/>
</dbReference>
<dbReference type="GO" id="GO:0047730">
    <property type="term" value="F:carnosine synthase activity"/>
    <property type="evidence" value="ECO:0000314"/>
    <property type="project" value="UniProtKB"/>
</dbReference>
<dbReference type="GO" id="GO:0102102">
    <property type="term" value="F:homocarnosine synthase activity"/>
    <property type="evidence" value="ECO:0000314"/>
    <property type="project" value="UniProtKB"/>
</dbReference>
<dbReference type="GO" id="GO:0046872">
    <property type="term" value="F:metal ion binding"/>
    <property type="evidence" value="ECO:0007669"/>
    <property type="project" value="UniProtKB-KW"/>
</dbReference>
<dbReference type="GO" id="GO:0035499">
    <property type="term" value="P:carnosine biosynthetic process"/>
    <property type="evidence" value="ECO:0000314"/>
    <property type="project" value="UniProtKB"/>
</dbReference>
<dbReference type="FunFam" id="3.30.470.20:FF:000040">
    <property type="entry name" value="Carnosine synthase 1"/>
    <property type="match status" value="1"/>
</dbReference>
<dbReference type="FunFam" id="3.40.50.20:FF:000018">
    <property type="entry name" value="Carnosine synthase 1"/>
    <property type="match status" value="1"/>
</dbReference>
<dbReference type="Gene3D" id="3.40.50.20">
    <property type="match status" value="1"/>
</dbReference>
<dbReference type="Gene3D" id="3.30.470.20">
    <property type="entry name" value="ATP-grasp fold, B domain"/>
    <property type="match status" value="1"/>
</dbReference>
<dbReference type="InterPro" id="IPR011761">
    <property type="entry name" value="ATP-grasp"/>
</dbReference>
<dbReference type="InterPro" id="IPR041472">
    <property type="entry name" value="BL00235/CARNS1_N"/>
</dbReference>
<dbReference type="InterPro" id="IPR031046">
    <property type="entry name" value="CARNS1"/>
</dbReference>
<dbReference type="PANTHER" id="PTHR48066">
    <property type="entry name" value="CARNOSINE SYNTHASE 1"/>
    <property type="match status" value="1"/>
</dbReference>
<dbReference type="PANTHER" id="PTHR48066:SF1">
    <property type="entry name" value="CARNOSINE SYNTHASE 1"/>
    <property type="match status" value="1"/>
</dbReference>
<dbReference type="Pfam" id="PF18130">
    <property type="entry name" value="ATPgrasp_N"/>
    <property type="match status" value="1"/>
</dbReference>
<dbReference type="Pfam" id="PF15632">
    <property type="entry name" value="ATPgrasp_Ter"/>
    <property type="match status" value="1"/>
</dbReference>
<dbReference type="SUPFAM" id="SSF56059">
    <property type="entry name" value="Glutathione synthetase ATP-binding domain-like"/>
    <property type="match status" value="1"/>
</dbReference>
<dbReference type="PROSITE" id="PS50975">
    <property type="entry name" value="ATP_GRASP"/>
    <property type="match status" value="1"/>
</dbReference>
<gene>
    <name evidence="7" type="primary">Carns1</name>
    <name type="synonym">Atpgd1</name>
    <name type="synonym">Kiaa1394</name>
</gene>
<accession>Q6ZPS2</accession>
<accession>Q8CIK7</accession>
<accession>Q8VE56</accession>
<reference key="1">
    <citation type="journal article" date="2003" name="DNA Res.">
        <title>Prediction of the coding sequences of mouse homologues of KIAA gene: III. The complete nucleotide sequences of 500 mouse KIAA-homologous cDNAs identified by screening of terminal sequences of cDNA clones randomly sampled from size-fractionated libraries.</title>
        <authorList>
            <person name="Okazaki N."/>
            <person name="Kikuno R."/>
            <person name="Ohara R."/>
            <person name="Inamoto S."/>
            <person name="Koseki H."/>
            <person name="Hiraoka S."/>
            <person name="Saga Y."/>
            <person name="Nagase T."/>
            <person name="Ohara O."/>
            <person name="Koga H."/>
        </authorList>
    </citation>
    <scope>NUCLEOTIDE SEQUENCE [LARGE SCALE MRNA] (ISOFORM 2)</scope>
    <source>
        <tissue>Embryonic tail</tissue>
    </source>
</reference>
<reference key="2">
    <citation type="journal article" date="2009" name="PLoS Biol.">
        <title>Lineage-specific biology revealed by a finished genome assembly of the mouse.</title>
        <authorList>
            <person name="Church D.M."/>
            <person name="Goodstadt L."/>
            <person name="Hillier L.W."/>
            <person name="Zody M.C."/>
            <person name="Goldstein S."/>
            <person name="She X."/>
            <person name="Bult C.J."/>
            <person name="Agarwala R."/>
            <person name="Cherry J.L."/>
            <person name="DiCuccio M."/>
            <person name="Hlavina W."/>
            <person name="Kapustin Y."/>
            <person name="Meric P."/>
            <person name="Maglott D."/>
            <person name="Birtle Z."/>
            <person name="Marques A.C."/>
            <person name="Graves T."/>
            <person name="Zhou S."/>
            <person name="Teague B."/>
            <person name="Potamousis K."/>
            <person name="Churas C."/>
            <person name="Place M."/>
            <person name="Herschleb J."/>
            <person name="Runnheim R."/>
            <person name="Forrest D."/>
            <person name="Amos-Landgraf J."/>
            <person name="Schwartz D.C."/>
            <person name="Cheng Z."/>
            <person name="Lindblad-Toh K."/>
            <person name="Eichler E.E."/>
            <person name="Ponting C.P."/>
        </authorList>
    </citation>
    <scope>NUCLEOTIDE SEQUENCE [LARGE SCALE GENOMIC DNA]</scope>
    <source>
        <strain>C57BL/6J</strain>
    </source>
</reference>
<reference key="3">
    <citation type="journal article" date="2004" name="Genome Res.">
        <title>The status, quality, and expansion of the NIH full-length cDNA project: the Mammalian Gene Collection (MGC).</title>
        <authorList>
            <consortium name="The MGC Project Team"/>
        </authorList>
    </citation>
    <scope>NUCLEOTIDE SEQUENCE [LARGE SCALE MRNA] (ISOFORM 3)</scope>
    <source>
        <strain>Czech II</strain>
        <strain>FVB/N</strain>
        <tissue>Mammary tumor</tissue>
    </source>
</reference>
<reference key="4">
    <citation type="journal article" date="2010" name="J. Biol. Chem.">
        <title>Molecular identification of carnosine synthase as ATP-grasp domain-containing protein 1 (ATPGD1).</title>
        <authorList>
            <person name="Drozak J."/>
            <person name="Veiga-da-Cunha M."/>
            <person name="Vertommen D."/>
            <person name="Stroobant V."/>
            <person name="Van Schaftingen E."/>
        </authorList>
    </citation>
    <scope>FUNCTION</scope>
    <scope>CATALYTIC ACTIVITY</scope>
    <scope>BIOPHYSICOCHEMICAL PROPERTIES</scope>
    <scope>SUBUNIT</scope>
</reference>
<protein>
    <recommendedName>
        <fullName evidence="6">Carnosine synthase 1</fullName>
        <ecNumber evidence="2">6.3.2.11</ecNumber>
    </recommendedName>
    <alternativeName>
        <fullName>ATP-grasp domain-containing protein 1</fullName>
    </alternativeName>
</protein>
<keyword id="KW-0025">Alternative splicing</keyword>
<keyword id="KW-0067">ATP-binding</keyword>
<keyword id="KW-0436">Ligase</keyword>
<keyword id="KW-0460">Magnesium</keyword>
<keyword id="KW-0464">Manganese</keyword>
<keyword id="KW-0479">Metal-binding</keyword>
<keyword id="KW-0547">Nucleotide-binding</keyword>
<keyword id="KW-1185">Reference proteome</keyword>
<organism>
    <name type="scientific">Mus musculus</name>
    <name type="common">Mouse</name>
    <dbReference type="NCBI Taxonomy" id="10090"/>
    <lineage>
        <taxon>Eukaryota</taxon>
        <taxon>Metazoa</taxon>
        <taxon>Chordata</taxon>
        <taxon>Craniata</taxon>
        <taxon>Vertebrata</taxon>
        <taxon>Euteleostomi</taxon>
        <taxon>Mammalia</taxon>
        <taxon>Eutheria</taxon>
        <taxon>Euarchontoglires</taxon>
        <taxon>Glires</taxon>
        <taxon>Rodentia</taxon>
        <taxon>Myomorpha</taxon>
        <taxon>Muroidea</taxon>
        <taxon>Muridae</taxon>
        <taxon>Murinae</taxon>
        <taxon>Mus</taxon>
        <taxon>Mus</taxon>
    </lineage>
</organism>
<sequence>MLLCLSPAWLMKVATPGQEGEAVLLVSKAVSFYPGGLTFLDDFVPPRHATYFLAGLGPESGRGKEAAELARNLTCPTGTSSELSQLLENRLLMRWLLSQQSGVAVPATLAFTYRPPGLLRGGDASPGLRLVELSGKEGQETLVKEEVEAFVHSEALGDASQVAVRLSGCRWRGQQALPLHLRVEPSTVVNTVLGLLEKLEEEESVLVEAMCPPVRLPLPGGPAPGPELAVRICAVVCRIQGDRPLLSKVVCGVGRGDRPVRHHYTLPRTLRVALAQCGLEEEAQVALLEQGIKEAAEGALAAVLALEAGLSVEQRGGRQVHTDFLGVDLVLTVIGRTLTPVVLKLNSGLCLEACGALEGLWAVPRLRRSAEEAAAAPLVETMLRRSGRHLMDGKQLLVIGAGGVSKKFVWEAARDYGLTLHLVESDPNHFASQLVQTFIHFDVTEHRRDEENALLLAELVRARNLKLDGCFSFWDDCLVLTALLCRELGLPCSPPAAMCLAKQKSRTQLHLLRCQGPPWPSTSLHAVACCPLENEADVERAIYQVPLPGVMKLEFGSGAVGVQLVKDGPQCREHFSRILHDLQGEADHPGIGLGWGNAMLLMEFVEGTEHDVDLVVFGGRLLAAFVSDNGPTRLPGFTETAACMPTGLAPEQEAQVVQAAFRCCLGCGLLDGVFNVELKMTGAGPRLIEINPRMGGFYLRDWILELYGVDLLLASTMVACGLQPALPAHPRARGYLVGIMCLVSQHLQLLSSPSSRETLQTLHDQGQLRLNLLEEALIPGQYEEPYCNVACAGPSPAEACHRLLGICQGLGIDRPNYPVAHFLSHFK</sequence>
<name>CRNS1_MOUSE</name>
<comment type="function">
    <text evidence="2">Catalyzes the synthesis of carnosine and homocarnosine. Carnosine is synthesized more efficiently than homocarnosine.</text>
</comment>
<comment type="catalytic activity">
    <reaction evidence="2">
        <text>beta-alanine + L-histidine + ATP = carnosine + ADP + phosphate + H(+)</text>
        <dbReference type="Rhea" id="RHEA:19297"/>
        <dbReference type="ChEBI" id="CHEBI:15378"/>
        <dbReference type="ChEBI" id="CHEBI:30616"/>
        <dbReference type="ChEBI" id="CHEBI:43474"/>
        <dbReference type="ChEBI" id="CHEBI:57485"/>
        <dbReference type="ChEBI" id="CHEBI:57595"/>
        <dbReference type="ChEBI" id="CHEBI:57966"/>
        <dbReference type="ChEBI" id="CHEBI:456216"/>
        <dbReference type="EC" id="6.3.2.11"/>
    </reaction>
    <physiologicalReaction direction="left-to-right" evidence="6">
        <dbReference type="Rhea" id="RHEA:19298"/>
    </physiologicalReaction>
</comment>
<comment type="catalytic activity">
    <reaction evidence="2">
        <text>4-aminobutanoate + L-histidine + ATP = L-homocarnosine + ADP + phosphate + H(+)</text>
        <dbReference type="Rhea" id="RHEA:59568"/>
        <dbReference type="ChEBI" id="CHEBI:15378"/>
        <dbReference type="ChEBI" id="CHEBI:30616"/>
        <dbReference type="ChEBI" id="CHEBI:43474"/>
        <dbReference type="ChEBI" id="CHEBI:57595"/>
        <dbReference type="ChEBI" id="CHEBI:59888"/>
        <dbReference type="ChEBI" id="CHEBI:143075"/>
        <dbReference type="ChEBI" id="CHEBI:456216"/>
    </reaction>
    <physiologicalReaction direction="left-to-right" evidence="6">
        <dbReference type="Rhea" id="RHEA:59569"/>
    </physiologicalReaction>
</comment>
<comment type="cofactor">
    <cofactor evidence="1">
        <name>Mg(2+)</name>
        <dbReference type="ChEBI" id="CHEBI:18420"/>
    </cofactor>
    <cofactor evidence="1">
        <name>Mn(2+)</name>
        <dbReference type="ChEBI" id="CHEBI:29035"/>
    </cofactor>
    <text evidence="1">Binds 2 magnesium or manganese ions per subunit.</text>
</comment>
<comment type="biophysicochemical properties">
    <kinetics>
        <KM evidence="2">0.46 mM for beta-alanine</KM>
        <KM evidence="2">6.44 mM for 4-aminobutanoate</KM>
        <KM evidence="2">0.11 mM for L-histidine</KM>
        <KM evidence="2">1.59 mM for L-lysine</KM>
        <KM evidence="2">0.52 mM for L-ornithine</KM>
        <KM evidence="2">4.51 mM for N-methylhistidine</KM>
        <Vmax evidence="2">300.0 nmol/min/mg enzyme toward beta-alanine</Vmax>
        <Vmax evidence="2">238.0 nmol/min/mg enzyme toward gamma-aminobutyrate</Vmax>
        <Vmax evidence="2">0.6 nmol/min/mg enzyme toward L-histidine</Vmax>
        <Vmax evidence="2">0.78 nmol/min/mg enzyme toward L-lysine</Vmax>
        <Vmax evidence="2">1.92 nmol/min/mg enzyme toward L-ornithine</Vmax>
        <Vmax evidence="2">0.66 nmol/min/mg enzyme toward N-methylhistidine</Vmax>
    </kinetics>
</comment>
<comment type="subunit">
    <text evidence="6">Homotetramer.</text>
</comment>
<comment type="alternative products">
    <event type="alternative splicing"/>
    <isoform>
        <id>Q6ZPS2-1</id>
        <name>1</name>
        <sequence type="displayed"/>
    </isoform>
    <isoform>
        <id>Q6ZPS2-2</id>
        <name>2</name>
        <sequence type="described" ref="VSP_032928 VSP_032929"/>
    </isoform>
    <isoform>
        <id>Q6ZPS2-3</id>
        <name>3</name>
        <sequence type="described" ref="VSP_032927"/>
    </isoform>
</comment>
<comment type="sequence caution" evidence="5">
    <conflict type="erroneous initiation">
        <sequence resource="EMBL-CDS" id="BAC98157"/>
    </conflict>
    <text>Extended N-terminus.</text>
</comment>
<evidence type="ECO:0000255" key="1">
    <source>
        <dbReference type="PROSITE-ProRule" id="PRU00409"/>
    </source>
</evidence>
<evidence type="ECO:0000269" key="2">
    <source>
    </source>
</evidence>
<evidence type="ECO:0000303" key="3">
    <source>
    </source>
</evidence>
<evidence type="ECO:0000303" key="4">
    <source>
    </source>
</evidence>
<evidence type="ECO:0000305" key="5"/>
<evidence type="ECO:0000305" key="6">
    <source>
    </source>
</evidence>
<evidence type="ECO:0000312" key="7">
    <source>
        <dbReference type="MGI" id="MGI:2147595"/>
    </source>
</evidence>